<evidence type="ECO:0000255" key="1">
    <source>
        <dbReference type="HAMAP-Rule" id="MF_00031"/>
    </source>
</evidence>
<proteinExistence type="inferred from homology"/>
<name>RUVA_BACAA</name>
<comment type="function">
    <text evidence="1">The RuvA-RuvB-RuvC complex processes Holliday junction (HJ) DNA during genetic recombination and DNA repair, while the RuvA-RuvB complex plays an important role in the rescue of blocked DNA replication forks via replication fork reversal (RFR). RuvA specifically binds to HJ cruciform DNA, conferring on it an open structure. The RuvB hexamer acts as an ATP-dependent pump, pulling dsDNA into and through the RuvAB complex. HJ branch migration allows RuvC to scan DNA until it finds its consensus sequence, where it cleaves and resolves the cruciform DNA.</text>
</comment>
<comment type="subunit">
    <text evidence="1">Homotetramer. Forms an RuvA(8)-RuvB(12)-Holliday junction (HJ) complex. HJ DNA is sandwiched between 2 RuvA tetramers; dsDNA enters through RuvA and exits via RuvB. An RuvB hexamer assembles on each DNA strand where it exits the tetramer. Each RuvB hexamer is contacted by two RuvA subunits (via domain III) on 2 adjacent RuvB subunits; this complex drives branch migration. In the full resolvosome a probable DNA-RuvA(4)-RuvB(12)-RuvC(2) complex forms which resolves the HJ.</text>
</comment>
<comment type="subcellular location">
    <subcellularLocation>
        <location evidence="1">Cytoplasm</location>
    </subcellularLocation>
</comment>
<comment type="domain">
    <text evidence="1">Has three domains with a flexible linker between the domains II and III and assumes an 'L' shape. Domain III is highly mobile and contacts RuvB.</text>
</comment>
<comment type="similarity">
    <text evidence="1">Belongs to the RuvA family.</text>
</comment>
<protein>
    <recommendedName>
        <fullName evidence="1">Holliday junction branch migration complex subunit RuvA</fullName>
    </recommendedName>
</protein>
<dbReference type="EMBL" id="CP001598">
    <property type="protein sequence ID" value="ACQ48866.1"/>
    <property type="molecule type" value="Genomic_DNA"/>
</dbReference>
<dbReference type="RefSeq" id="WP_000464508.1">
    <property type="nucleotide sequence ID" value="NC_012659.1"/>
</dbReference>
<dbReference type="SMR" id="C3P9A8"/>
<dbReference type="GeneID" id="93006680"/>
<dbReference type="KEGG" id="bai:BAA_4668"/>
<dbReference type="HOGENOM" id="CLU_087936_1_0_9"/>
<dbReference type="GO" id="GO:0005737">
    <property type="term" value="C:cytoplasm"/>
    <property type="evidence" value="ECO:0007669"/>
    <property type="project" value="UniProtKB-SubCell"/>
</dbReference>
<dbReference type="GO" id="GO:0009379">
    <property type="term" value="C:Holliday junction helicase complex"/>
    <property type="evidence" value="ECO:0007669"/>
    <property type="project" value="InterPro"/>
</dbReference>
<dbReference type="GO" id="GO:0048476">
    <property type="term" value="C:Holliday junction resolvase complex"/>
    <property type="evidence" value="ECO:0007669"/>
    <property type="project" value="UniProtKB-UniRule"/>
</dbReference>
<dbReference type="GO" id="GO:0005524">
    <property type="term" value="F:ATP binding"/>
    <property type="evidence" value="ECO:0007669"/>
    <property type="project" value="InterPro"/>
</dbReference>
<dbReference type="GO" id="GO:0000400">
    <property type="term" value="F:four-way junction DNA binding"/>
    <property type="evidence" value="ECO:0007669"/>
    <property type="project" value="UniProtKB-UniRule"/>
</dbReference>
<dbReference type="GO" id="GO:0009378">
    <property type="term" value="F:four-way junction helicase activity"/>
    <property type="evidence" value="ECO:0007669"/>
    <property type="project" value="InterPro"/>
</dbReference>
<dbReference type="GO" id="GO:0006310">
    <property type="term" value="P:DNA recombination"/>
    <property type="evidence" value="ECO:0007669"/>
    <property type="project" value="UniProtKB-UniRule"/>
</dbReference>
<dbReference type="GO" id="GO:0006281">
    <property type="term" value="P:DNA repair"/>
    <property type="evidence" value="ECO:0007669"/>
    <property type="project" value="UniProtKB-UniRule"/>
</dbReference>
<dbReference type="CDD" id="cd14332">
    <property type="entry name" value="UBA_RuvA_C"/>
    <property type="match status" value="1"/>
</dbReference>
<dbReference type="Gene3D" id="1.10.150.20">
    <property type="entry name" value="5' to 3' exonuclease, C-terminal subdomain"/>
    <property type="match status" value="1"/>
</dbReference>
<dbReference type="Gene3D" id="1.10.8.10">
    <property type="entry name" value="DNA helicase RuvA subunit, C-terminal domain"/>
    <property type="match status" value="1"/>
</dbReference>
<dbReference type="Gene3D" id="2.40.50.140">
    <property type="entry name" value="Nucleic acid-binding proteins"/>
    <property type="match status" value="1"/>
</dbReference>
<dbReference type="HAMAP" id="MF_00031">
    <property type="entry name" value="DNA_HJ_migration_RuvA"/>
    <property type="match status" value="1"/>
</dbReference>
<dbReference type="InterPro" id="IPR013849">
    <property type="entry name" value="DNA_helicase_Holl-junc_RuvA_I"/>
</dbReference>
<dbReference type="InterPro" id="IPR003583">
    <property type="entry name" value="Hlx-hairpin-Hlx_DNA-bd_motif"/>
</dbReference>
<dbReference type="InterPro" id="IPR012340">
    <property type="entry name" value="NA-bd_OB-fold"/>
</dbReference>
<dbReference type="InterPro" id="IPR000085">
    <property type="entry name" value="RuvA"/>
</dbReference>
<dbReference type="InterPro" id="IPR010994">
    <property type="entry name" value="RuvA_2-like"/>
</dbReference>
<dbReference type="InterPro" id="IPR011114">
    <property type="entry name" value="RuvA_C"/>
</dbReference>
<dbReference type="InterPro" id="IPR036267">
    <property type="entry name" value="RuvA_C_sf"/>
</dbReference>
<dbReference type="NCBIfam" id="TIGR00084">
    <property type="entry name" value="ruvA"/>
    <property type="match status" value="1"/>
</dbReference>
<dbReference type="Pfam" id="PF14520">
    <property type="entry name" value="HHH_5"/>
    <property type="match status" value="1"/>
</dbReference>
<dbReference type="Pfam" id="PF07499">
    <property type="entry name" value="RuvA_C"/>
    <property type="match status" value="1"/>
</dbReference>
<dbReference type="Pfam" id="PF01330">
    <property type="entry name" value="RuvA_N"/>
    <property type="match status" value="1"/>
</dbReference>
<dbReference type="SMART" id="SM00278">
    <property type="entry name" value="HhH1"/>
    <property type="match status" value="2"/>
</dbReference>
<dbReference type="SUPFAM" id="SSF46929">
    <property type="entry name" value="DNA helicase RuvA subunit, C-terminal domain"/>
    <property type="match status" value="1"/>
</dbReference>
<dbReference type="SUPFAM" id="SSF50249">
    <property type="entry name" value="Nucleic acid-binding proteins"/>
    <property type="match status" value="1"/>
</dbReference>
<dbReference type="SUPFAM" id="SSF47781">
    <property type="entry name" value="RuvA domain 2-like"/>
    <property type="match status" value="1"/>
</dbReference>
<reference key="1">
    <citation type="submission" date="2009-04" db="EMBL/GenBank/DDBJ databases">
        <title>Genome sequence of Bacillus anthracis A0248.</title>
        <authorList>
            <person name="Dodson R.J."/>
            <person name="Munk A.C."/>
            <person name="Bruce D."/>
            <person name="Detter C."/>
            <person name="Tapia R."/>
            <person name="Sutton G."/>
            <person name="Sims D."/>
            <person name="Brettin T."/>
        </authorList>
    </citation>
    <scope>NUCLEOTIDE SEQUENCE [LARGE SCALE GENOMIC DNA]</scope>
    <source>
        <strain>A0248</strain>
    </source>
</reference>
<keyword id="KW-0963">Cytoplasm</keyword>
<keyword id="KW-0227">DNA damage</keyword>
<keyword id="KW-0233">DNA recombination</keyword>
<keyword id="KW-0234">DNA repair</keyword>
<keyword id="KW-0238">DNA-binding</keyword>
<gene>
    <name evidence="1" type="primary">ruvA</name>
    <name type="ordered locus">BAA_4668</name>
</gene>
<feature type="chain" id="PRO_1000195113" description="Holliday junction branch migration complex subunit RuvA">
    <location>
        <begin position="1"/>
        <end position="205"/>
    </location>
</feature>
<feature type="region of interest" description="Domain I" evidence="1">
    <location>
        <begin position="1"/>
        <end position="62"/>
    </location>
</feature>
<feature type="region of interest" description="Domain II" evidence="1">
    <location>
        <begin position="63"/>
        <end position="141"/>
    </location>
</feature>
<feature type="region of interest" description="Flexible linker" evidence="1">
    <location>
        <begin position="142"/>
        <end position="152"/>
    </location>
</feature>
<feature type="region of interest" description="Domain III" evidence="1">
    <location>
        <begin position="153"/>
        <end position="205"/>
    </location>
</feature>
<accession>C3P9A8</accession>
<sequence length="205" mass="23194">MFEYVTGYVEYVGPEYVVIDHNGIGYQIFTPNPYVFQRSKQEIRVYTYHYVREDIMALYGFKTREERLLFTKLLGVSGIGPKGALAILASGQTGQVVQAIEHEDEKFLVKFPGVGKKTARQMILDLKGKLADVVPDAFVDLFSDEERFDEKKGSSAELDEALEALRALGYAEREVSRVVPELLKESLTTDQYIKKALSLLLNGKR</sequence>
<organism>
    <name type="scientific">Bacillus anthracis (strain A0248)</name>
    <dbReference type="NCBI Taxonomy" id="592021"/>
    <lineage>
        <taxon>Bacteria</taxon>
        <taxon>Bacillati</taxon>
        <taxon>Bacillota</taxon>
        <taxon>Bacilli</taxon>
        <taxon>Bacillales</taxon>
        <taxon>Bacillaceae</taxon>
        <taxon>Bacillus</taxon>
        <taxon>Bacillus cereus group</taxon>
    </lineage>
</organism>